<feature type="chain" id="PRO_0000201380" description="Probable Ni/Fe-hydrogenase B-type cytochrome subunit">
    <location>
        <begin position="1"/>
        <end position="240"/>
    </location>
</feature>
<feature type="transmembrane region" description="Helical" evidence="1">
    <location>
        <begin position="31"/>
        <end position="51"/>
    </location>
</feature>
<feature type="transmembrane region" description="Helical" evidence="1">
    <location>
        <begin position="75"/>
        <end position="95"/>
    </location>
</feature>
<feature type="transmembrane region" description="Helical" evidence="1">
    <location>
        <begin position="142"/>
        <end position="163"/>
    </location>
</feature>
<feature type="transmembrane region" description="Helical" evidence="1">
    <location>
        <begin position="196"/>
        <end position="213"/>
    </location>
</feature>
<organism>
    <name type="scientific">Azotobacter vinelandii</name>
    <dbReference type="NCBI Taxonomy" id="354"/>
    <lineage>
        <taxon>Bacteria</taxon>
        <taxon>Pseudomonadati</taxon>
        <taxon>Pseudomonadota</taxon>
        <taxon>Gammaproteobacteria</taxon>
        <taxon>Pseudomonadales</taxon>
        <taxon>Pseudomonadaceae</taxon>
        <taxon>Azotobacter</taxon>
    </lineage>
</organism>
<comment type="function">
    <text>Probable b-type cytochrome.</text>
</comment>
<comment type="subcellular location">
    <subcellularLocation>
        <location>Cell membrane</location>
        <topology>Multi-pass membrane protein</topology>
    </subcellularLocation>
</comment>
<comment type="similarity">
    <text evidence="2">Belongs to the HupC/HyaC/HydC family.</text>
</comment>
<dbReference type="EMBL" id="M33152">
    <property type="protein sequence ID" value="AAA82507.1"/>
    <property type="molecule type" value="Genomic_DNA"/>
</dbReference>
<dbReference type="EMBL" id="L23970">
    <property type="protein sequence ID" value="AAA19500.1"/>
    <property type="molecule type" value="Unassigned_DNA"/>
</dbReference>
<dbReference type="PIR" id="JQ0807">
    <property type="entry name" value="JQ0807"/>
</dbReference>
<dbReference type="SMR" id="P23000"/>
<dbReference type="OMA" id="FYIAYPF"/>
<dbReference type="GO" id="GO:0005886">
    <property type="term" value="C:plasma membrane"/>
    <property type="evidence" value="ECO:0007669"/>
    <property type="project" value="UniProtKB-SubCell"/>
</dbReference>
<dbReference type="GO" id="GO:0009055">
    <property type="term" value="F:electron transfer activity"/>
    <property type="evidence" value="ECO:0007669"/>
    <property type="project" value="InterPro"/>
</dbReference>
<dbReference type="GO" id="GO:0020037">
    <property type="term" value="F:heme binding"/>
    <property type="evidence" value="ECO:0007669"/>
    <property type="project" value="TreeGrafter"/>
</dbReference>
<dbReference type="GO" id="GO:0005506">
    <property type="term" value="F:iron ion binding"/>
    <property type="evidence" value="ECO:0007669"/>
    <property type="project" value="InterPro"/>
</dbReference>
<dbReference type="GO" id="GO:0022904">
    <property type="term" value="P:respiratory electron transport chain"/>
    <property type="evidence" value="ECO:0007669"/>
    <property type="project" value="InterPro"/>
</dbReference>
<dbReference type="FunFam" id="1.20.950.20:FF:000003">
    <property type="entry name" value="Ni/Fe-hydrogenase 1 b-type cytochrome subunit"/>
    <property type="match status" value="1"/>
</dbReference>
<dbReference type="Gene3D" id="1.20.950.20">
    <property type="entry name" value="Transmembrane di-heme cytochromes, Chain C"/>
    <property type="match status" value="1"/>
</dbReference>
<dbReference type="InterPro" id="IPR011577">
    <property type="entry name" value="Cyt_b561_bac/Ni-Hgenase"/>
</dbReference>
<dbReference type="InterPro" id="IPR016174">
    <property type="entry name" value="Di-haem_cyt_TM"/>
</dbReference>
<dbReference type="InterPro" id="IPR051542">
    <property type="entry name" value="Hydrogenase_cytochrome"/>
</dbReference>
<dbReference type="InterPro" id="IPR000516">
    <property type="entry name" value="Ni-dep_Hydgase_cyt-B"/>
</dbReference>
<dbReference type="NCBIfam" id="TIGR02125">
    <property type="entry name" value="CytB-hydogenase"/>
    <property type="match status" value="1"/>
</dbReference>
<dbReference type="PANTHER" id="PTHR30485">
    <property type="entry name" value="NI/FE-HYDROGENASE 1 B-TYPE CYTOCHROME SUBUNIT"/>
    <property type="match status" value="1"/>
</dbReference>
<dbReference type="PANTHER" id="PTHR30485:SF0">
    <property type="entry name" value="NI_FE-HYDROGENASE 1 B-TYPE CYTOCHROME SUBUNIT-RELATED"/>
    <property type="match status" value="1"/>
</dbReference>
<dbReference type="Pfam" id="PF01292">
    <property type="entry name" value="Ni_hydr_CYTB"/>
    <property type="match status" value="1"/>
</dbReference>
<dbReference type="PRINTS" id="PR00161">
    <property type="entry name" value="NIHGNASECYTB"/>
</dbReference>
<dbReference type="SUPFAM" id="SSF81342">
    <property type="entry name" value="Transmembrane di-heme cytochromes"/>
    <property type="match status" value="1"/>
</dbReference>
<dbReference type="PROSITE" id="PS00882">
    <property type="entry name" value="NI_HGENASE_CYTB_1"/>
    <property type="match status" value="1"/>
</dbReference>
<dbReference type="PROSITE" id="PS00883">
    <property type="entry name" value="NI_HGENASE_CYTB_2"/>
    <property type="match status" value="1"/>
</dbReference>
<gene>
    <name type="primary">hoxZ</name>
</gene>
<name>CYBH_AZOVI</name>
<proteinExistence type="inferred from homology"/>
<evidence type="ECO:0000255" key="1"/>
<evidence type="ECO:0000305" key="2"/>
<sequence>MALEKSLETGDGQEKVRKQTAVYVYEAPLRLWHWVTALSIVVLGVTGYFIGAPLPTMPGEAMDNYLMGYIRFAHFAAGYVLAIGFLGRVYWAFVGNHHARELFLVPVHRKAWWKELWHEVRWYLFLEKTPKKYIGHNPLGQLAMFCFFVVGAVFMSVTGFALYAEGLGRDSWADRLFGWVIPLFGQSQDVHTWHHLGMWYLVVFVMVHVYLAVREDIVSRQSLISTMVGGWRMFKDDRPD</sequence>
<accession>P23000</accession>
<reference key="1">
    <citation type="journal article" date="1990" name="Gene">
        <title>Cloning, sequencing and characterization of the [NiFe]hydrogenase-encoding structural genes (hoxK and hoxG) from Azotobacter vinelandii.</title>
        <authorList>
            <person name="Menon A.L."/>
            <person name="Stults L.W."/>
            <person name="Robson R.L."/>
            <person name="Mortenson L.E."/>
        </authorList>
    </citation>
    <scope>NUCLEOTIDE SEQUENCE [GENOMIC DNA]</scope>
    <source>
        <strain>ATCC 13705 / OP1 / DSM 366 / NCIMB 11614 / LMG 3878 / UW</strain>
    </source>
</reference>
<protein>
    <recommendedName>
        <fullName>Probable Ni/Fe-hydrogenase B-type cytochrome subunit</fullName>
    </recommendedName>
</protein>
<keyword id="KW-1003">Cell membrane</keyword>
<keyword id="KW-0249">Electron transport</keyword>
<keyword id="KW-0349">Heme</keyword>
<keyword id="KW-0408">Iron</keyword>
<keyword id="KW-0472">Membrane</keyword>
<keyword id="KW-0479">Metal-binding</keyword>
<keyword id="KW-0812">Transmembrane</keyword>
<keyword id="KW-1133">Transmembrane helix</keyword>
<keyword id="KW-0813">Transport</keyword>